<sequence length="97" mass="10397">MSVNIKPLEDRIVVKPLDAEQTTASGLVIPDTAKEKPQEGEVLAIGPGRIDDNGNRVPLDVTVGDKVIYSKYGGTEVKYAGEEYLILSARDVLAVVS</sequence>
<gene>
    <name evidence="1" type="primary">groES</name>
    <name evidence="1" type="synonym">groS</name>
    <name type="ordered locus">Noca_3647</name>
</gene>
<accession>A1SMW2</accession>
<protein>
    <recommendedName>
        <fullName evidence="1">Co-chaperonin GroES</fullName>
    </recommendedName>
    <alternativeName>
        <fullName evidence="1">10 kDa chaperonin</fullName>
    </alternativeName>
    <alternativeName>
        <fullName evidence="1">Chaperonin-10</fullName>
        <shortName evidence="1">Cpn10</shortName>
    </alternativeName>
</protein>
<feature type="chain" id="PRO_1000025314" description="Co-chaperonin GroES">
    <location>
        <begin position="1"/>
        <end position="97"/>
    </location>
</feature>
<organism>
    <name type="scientific">Nocardioides sp. (strain ATCC BAA-499 / JS614)</name>
    <dbReference type="NCBI Taxonomy" id="196162"/>
    <lineage>
        <taxon>Bacteria</taxon>
        <taxon>Bacillati</taxon>
        <taxon>Actinomycetota</taxon>
        <taxon>Actinomycetes</taxon>
        <taxon>Propionibacteriales</taxon>
        <taxon>Nocardioidaceae</taxon>
        <taxon>Nocardioides</taxon>
    </lineage>
</organism>
<keyword id="KW-0143">Chaperone</keyword>
<keyword id="KW-0963">Cytoplasm</keyword>
<keyword id="KW-1185">Reference proteome</keyword>
<name>CH10_NOCSJ</name>
<dbReference type="EMBL" id="CP000509">
    <property type="protein sequence ID" value="ABL83147.1"/>
    <property type="molecule type" value="Genomic_DNA"/>
</dbReference>
<dbReference type="RefSeq" id="WP_011757078.1">
    <property type="nucleotide sequence ID" value="NC_008699.1"/>
</dbReference>
<dbReference type="SMR" id="A1SMW2"/>
<dbReference type="STRING" id="196162.Noca_3647"/>
<dbReference type="KEGG" id="nca:Noca_3647"/>
<dbReference type="eggNOG" id="COG0234">
    <property type="taxonomic scope" value="Bacteria"/>
</dbReference>
<dbReference type="HOGENOM" id="CLU_132825_2_0_11"/>
<dbReference type="OrthoDB" id="9806791at2"/>
<dbReference type="Proteomes" id="UP000000640">
    <property type="component" value="Chromosome"/>
</dbReference>
<dbReference type="GO" id="GO:0005737">
    <property type="term" value="C:cytoplasm"/>
    <property type="evidence" value="ECO:0007669"/>
    <property type="project" value="UniProtKB-SubCell"/>
</dbReference>
<dbReference type="GO" id="GO:0005524">
    <property type="term" value="F:ATP binding"/>
    <property type="evidence" value="ECO:0007669"/>
    <property type="project" value="InterPro"/>
</dbReference>
<dbReference type="GO" id="GO:0046872">
    <property type="term" value="F:metal ion binding"/>
    <property type="evidence" value="ECO:0007669"/>
    <property type="project" value="TreeGrafter"/>
</dbReference>
<dbReference type="GO" id="GO:0044183">
    <property type="term" value="F:protein folding chaperone"/>
    <property type="evidence" value="ECO:0007669"/>
    <property type="project" value="InterPro"/>
</dbReference>
<dbReference type="GO" id="GO:0051087">
    <property type="term" value="F:protein-folding chaperone binding"/>
    <property type="evidence" value="ECO:0007669"/>
    <property type="project" value="TreeGrafter"/>
</dbReference>
<dbReference type="GO" id="GO:0051082">
    <property type="term" value="F:unfolded protein binding"/>
    <property type="evidence" value="ECO:0007669"/>
    <property type="project" value="TreeGrafter"/>
</dbReference>
<dbReference type="GO" id="GO:0051085">
    <property type="term" value="P:chaperone cofactor-dependent protein refolding"/>
    <property type="evidence" value="ECO:0007669"/>
    <property type="project" value="TreeGrafter"/>
</dbReference>
<dbReference type="CDD" id="cd00320">
    <property type="entry name" value="cpn10"/>
    <property type="match status" value="1"/>
</dbReference>
<dbReference type="FunFam" id="2.30.33.40:FF:000001">
    <property type="entry name" value="10 kDa chaperonin"/>
    <property type="match status" value="1"/>
</dbReference>
<dbReference type="Gene3D" id="2.30.33.40">
    <property type="entry name" value="GroES chaperonin"/>
    <property type="match status" value="1"/>
</dbReference>
<dbReference type="HAMAP" id="MF_00580">
    <property type="entry name" value="CH10"/>
    <property type="match status" value="1"/>
</dbReference>
<dbReference type="InterPro" id="IPR020818">
    <property type="entry name" value="Chaperonin_GroES"/>
</dbReference>
<dbReference type="InterPro" id="IPR037124">
    <property type="entry name" value="Chaperonin_GroES_sf"/>
</dbReference>
<dbReference type="InterPro" id="IPR018369">
    <property type="entry name" value="Chaprnonin_Cpn10_CS"/>
</dbReference>
<dbReference type="InterPro" id="IPR011032">
    <property type="entry name" value="GroES-like_sf"/>
</dbReference>
<dbReference type="NCBIfam" id="NF001527">
    <property type="entry name" value="PRK00364.1-2"/>
    <property type="match status" value="1"/>
</dbReference>
<dbReference type="NCBIfam" id="NF001530">
    <property type="entry name" value="PRK00364.1-6"/>
    <property type="match status" value="1"/>
</dbReference>
<dbReference type="NCBIfam" id="NF001531">
    <property type="entry name" value="PRK00364.2-2"/>
    <property type="match status" value="1"/>
</dbReference>
<dbReference type="NCBIfam" id="NF001533">
    <property type="entry name" value="PRK00364.2-4"/>
    <property type="match status" value="1"/>
</dbReference>
<dbReference type="NCBIfam" id="NF001534">
    <property type="entry name" value="PRK00364.2-5"/>
    <property type="match status" value="1"/>
</dbReference>
<dbReference type="PANTHER" id="PTHR10772">
    <property type="entry name" value="10 KDA HEAT SHOCK PROTEIN"/>
    <property type="match status" value="1"/>
</dbReference>
<dbReference type="PANTHER" id="PTHR10772:SF58">
    <property type="entry name" value="CO-CHAPERONIN GROES"/>
    <property type="match status" value="1"/>
</dbReference>
<dbReference type="Pfam" id="PF00166">
    <property type="entry name" value="Cpn10"/>
    <property type="match status" value="1"/>
</dbReference>
<dbReference type="PRINTS" id="PR00297">
    <property type="entry name" value="CHAPERONIN10"/>
</dbReference>
<dbReference type="SMART" id="SM00883">
    <property type="entry name" value="Cpn10"/>
    <property type="match status" value="1"/>
</dbReference>
<dbReference type="SUPFAM" id="SSF50129">
    <property type="entry name" value="GroES-like"/>
    <property type="match status" value="1"/>
</dbReference>
<dbReference type="PROSITE" id="PS00681">
    <property type="entry name" value="CHAPERONINS_CPN10"/>
    <property type="match status" value="1"/>
</dbReference>
<evidence type="ECO:0000255" key="1">
    <source>
        <dbReference type="HAMAP-Rule" id="MF_00580"/>
    </source>
</evidence>
<comment type="function">
    <text evidence="1">Together with the chaperonin GroEL, plays an essential role in assisting protein folding. The GroEL-GroES system forms a nano-cage that allows encapsulation of the non-native substrate proteins and provides a physical environment optimized to promote and accelerate protein folding. GroES binds to the apical surface of the GroEL ring, thereby capping the opening of the GroEL channel.</text>
</comment>
<comment type="subunit">
    <text evidence="1">Heptamer of 7 subunits arranged in a ring. Interacts with the chaperonin GroEL.</text>
</comment>
<comment type="subcellular location">
    <subcellularLocation>
        <location evidence="1">Cytoplasm</location>
    </subcellularLocation>
</comment>
<comment type="similarity">
    <text evidence="1">Belongs to the GroES chaperonin family.</text>
</comment>
<reference key="1">
    <citation type="submission" date="2006-12" db="EMBL/GenBank/DDBJ databases">
        <title>Complete sequence of chromosome 1 of Nocardioides sp. JS614.</title>
        <authorList>
            <person name="Copeland A."/>
            <person name="Lucas S."/>
            <person name="Lapidus A."/>
            <person name="Barry K."/>
            <person name="Detter J.C."/>
            <person name="Glavina del Rio T."/>
            <person name="Hammon N."/>
            <person name="Israni S."/>
            <person name="Dalin E."/>
            <person name="Tice H."/>
            <person name="Pitluck S."/>
            <person name="Thompson L.S."/>
            <person name="Brettin T."/>
            <person name="Bruce D."/>
            <person name="Han C."/>
            <person name="Tapia R."/>
            <person name="Schmutz J."/>
            <person name="Larimer F."/>
            <person name="Land M."/>
            <person name="Hauser L."/>
            <person name="Kyrpides N."/>
            <person name="Kim E."/>
            <person name="Mattes T."/>
            <person name="Gossett J."/>
            <person name="Richardson P."/>
        </authorList>
    </citation>
    <scope>NUCLEOTIDE SEQUENCE [LARGE SCALE GENOMIC DNA]</scope>
    <source>
        <strain>ATCC BAA-499 / JS614</strain>
    </source>
</reference>
<proteinExistence type="inferred from homology"/>